<sequence length="529" mass="59302">MSKQQKKEVEQRRCFGIISHPDAGKTTLTEKFLLFGGAIQLAGAVKARKAARHATSDWMSIERDRGISVTTSVMTFSYRDFFINLLDTPGHQDFSEDTYRVLTAVDSALMVIDSAKGVEAQTEKLMEVCRMRNTPIITFINKMDRDGMAPLDLLSDIEEKLQIECAPLTWPIGAGKGFAGVYNLYKKELQLFTAGGKTRQKDGIVIQDLDDPKLAELIGESKAEELREDIELLEGAANPFEMEHYLSGSQTPVFFGSAINNFGITELLDALVEMAPAPGLRPAESRDVSPLEEDFSGFTFKIQANMDPAHRDRIAFVRICSGKFNRGMKVMHHRIGKEMIISNATMFMAQDRANVEEAWPGDIIGVHNHGTIKIGDTFTIKEPLKFTGIPNFAPEHFRRVMLKDPMKAKQLNKGLTQLAEEGAVQVFRPLTSADNILGAVGVLQFDVTMARLKAEYNVDCIYEAIDYNTARWVECPDNKMLDEFRKANQANLALDGEGQLAYLAPSQWRLGFVQENWPDVVFHKTREYN</sequence>
<reference key="1">
    <citation type="journal article" date="2012" name="Environ. Microbiol.">
        <title>The genome sequence of Desulfatibacillum alkenivorans AK-01: a blueprint for anaerobic alkane oxidation.</title>
        <authorList>
            <person name="Callaghan A.V."/>
            <person name="Morris B.E."/>
            <person name="Pereira I.A."/>
            <person name="McInerney M.J."/>
            <person name="Austin R.N."/>
            <person name="Groves J.T."/>
            <person name="Kukor J.J."/>
            <person name="Suflita J.M."/>
            <person name="Young L.Y."/>
            <person name="Zylstra G.J."/>
            <person name="Wawrik B."/>
        </authorList>
    </citation>
    <scope>NUCLEOTIDE SEQUENCE [LARGE SCALE GENOMIC DNA]</scope>
    <source>
        <strain>AK-01</strain>
    </source>
</reference>
<organism>
    <name type="scientific">Desulfatibacillum aliphaticivorans</name>
    <dbReference type="NCBI Taxonomy" id="218208"/>
    <lineage>
        <taxon>Bacteria</taxon>
        <taxon>Pseudomonadati</taxon>
        <taxon>Thermodesulfobacteriota</taxon>
        <taxon>Desulfobacteria</taxon>
        <taxon>Desulfobacterales</taxon>
        <taxon>Desulfatibacillaceae</taxon>
        <taxon>Desulfatibacillum</taxon>
    </lineage>
</organism>
<accession>B8FGS8</accession>
<evidence type="ECO:0000255" key="1">
    <source>
        <dbReference type="HAMAP-Rule" id="MF_00072"/>
    </source>
</evidence>
<dbReference type="EMBL" id="CP001322">
    <property type="protein sequence ID" value="ACL05308.1"/>
    <property type="molecule type" value="Genomic_DNA"/>
</dbReference>
<dbReference type="RefSeq" id="WP_015948365.1">
    <property type="nucleotide sequence ID" value="NC_011768.1"/>
</dbReference>
<dbReference type="SMR" id="B8FGS8"/>
<dbReference type="KEGG" id="dal:Dalk_3620"/>
<dbReference type="eggNOG" id="COG4108">
    <property type="taxonomic scope" value="Bacteria"/>
</dbReference>
<dbReference type="HOGENOM" id="CLU_002794_2_1_7"/>
<dbReference type="Proteomes" id="UP000000739">
    <property type="component" value="Chromosome"/>
</dbReference>
<dbReference type="GO" id="GO:0005829">
    <property type="term" value="C:cytosol"/>
    <property type="evidence" value="ECO:0007669"/>
    <property type="project" value="TreeGrafter"/>
</dbReference>
<dbReference type="GO" id="GO:0005525">
    <property type="term" value="F:GTP binding"/>
    <property type="evidence" value="ECO:0007669"/>
    <property type="project" value="UniProtKB-UniRule"/>
</dbReference>
<dbReference type="GO" id="GO:0003924">
    <property type="term" value="F:GTPase activity"/>
    <property type="evidence" value="ECO:0007669"/>
    <property type="project" value="InterPro"/>
</dbReference>
<dbReference type="GO" id="GO:0016150">
    <property type="term" value="F:translation release factor activity, codon nonspecific"/>
    <property type="evidence" value="ECO:0007669"/>
    <property type="project" value="TreeGrafter"/>
</dbReference>
<dbReference type="GO" id="GO:0016149">
    <property type="term" value="F:translation release factor activity, codon specific"/>
    <property type="evidence" value="ECO:0007669"/>
    <property type="project" value="UniProtKB-UniRule"/>
</dbReference>
<dbReference type="GO" id="GO:0006449">
    <property type="term" value="P:regulation of translational termination"/>
    <property type="evidence" value="ECO:0007669"/>
    <property type="project" value="UniProtKB-UniRule"/>
</dbReference>
<dbReference type="CDD" id="cd04169">
    <property type="entry name" value="RF3"/>
    <property type="match status" value="1"/>
</dbReference>
<dbReference type="CDD" id="cd03689">
    <property type="entry name" value="RF3_II"/>
    <property type="match status" value="1"/>
</dbReference>
<dbReference type="CDD" id="cd16259">
    <property type="entry name" value="RF3_III"/>
    <property type="match status" value="1"/>
</dbReference>
<dbReference type="FunFam" id="2.40.30.10:FF:000040">
    <property type="entry name" value="Peptide chain release factor 3"/>
    <property type="match status" value="1"/>
</dbReference>
<dbReference type="FunFam" id="3.30.70.3280:FF:000001">
    <property type="entry name" value="Peptide chain release factor 3"/>
    <property type="match status" value="1"/>
</dbReference>
<dbReference type="FunFam" id="3.40.50.300:FF:000542">
    <property type="entry name" value="Peptide chain release factor 3"/>
    <property type="match status" value="1"/>
</dbReference>
<dbReference type="Gene3D" id="3.40.50.300">
    <property type="entry name" value="P-loop containing nucleotide triphosphate hydrolases"/>
    <property type="match status" value="3"/>
</dbReference>
<dbReference type="Gene3D" id="3.30.70.3280">
    <property type="entry name" value="Peptide chain release factor 3, domain III"/>
    <property type="match status" value="1"/>
</dbReference>
<dbReference type="HAMAP" id="MF_00072">
    <property type="entry name" value="Rel_fac_3"/>
    <property type="match status" value="1"/>
</dbReference>
<dbReference type="InterPro" id="IPR053905">
    <property type="entry name" value="EF-G-like_DII"/>
</dbReference>
<dbReference type="InterPro" id="IPR035647">
    <property type="entry name" value="EFG_III/V"/>
</dbReference>
<dbReference type="InterPro" id="IPR031157">
    <property type="entry name" value="G_TR_CS"/>
</dbReference>
<dbReference type="InterPro" id="IPR027417">
    <property type="entry name" value="P-loop_NTPase"/>
</dbReference>
<dbReference type="InterPro" id="IPR004548">
    <property type="entry name" value="PrfC"/>
</dbReference>
<dbReference type="InterPro" id="IPR032090">
    <property type="entry name" value="RF3_C"/>
</dbReference>
<dbReference type="InterPro" id="IPR038467">
    <property type="entry name" value="RF3_dom_3_sf"/>
</dbReference>
<dbReference type="InterPro" id="IPR041732">
    <property type="entry name" value="RF3_GTP-bd"/>
</dbReference>
<dbReference type="InterPro" id="IPR005225">
    <property type="entry name" value="Small_GTP-bd"/>
</dbReference>
<dbReference type="InterPro" id="IPR000795">
    <property type="entry name" value="T_Tr_GTP-bd_dom"/>
</dbReference>
<dbReference type="InterPro" id="IPR009000">
    <property type="entry name" value="Transl_B-barrel_sf"/>
</dbReference>
<dbReference type="NCBIfam" id="TIGR00503">
    <property type="entry name" value="prfC"/>
    <property type="match status" value="1"/>
</dbReference>
<dbReference type="NCBIfam" id="NF001964">
    <property type="entry name" value="PRK00741.1"/>
    <property type="match status" value="1"/>
</dbReference>
<dbReference type="NCBIfam" id="TIGR00231">
    <property type="entry name" value="small_GTP"/>
    <property type="match status" value="1"/>
</dbReference>
<dbReference type="PANTHER" id="PTHR43556">
    <property type="entry name" value="PEPTIDE CHAIN RELEASE FACTOR RF3"/>
    <property type="match status" value="1"/>
</dbReference>
<dbReference type="PANTHER" id="PTHR43556:SF2">
    <property type="entry name" value="PEPTIDE CHAIN RELEASE FACTOR RF3"/>
    <property type="match status" value="1"/>
</dbReference>
<dbReference type="Pfam" id="PF22042">
    <property type="entry name" value="EF-G_D2"/>
    <property type="match status" value="1"/>
</dbReference>
<dbReference type="Pfam" id="PF00009">
    <property type="entry name" value="GTP_EFTU"/>
    <property type="match status" value="1"/>
</dbReference>
<dbReference type="Pfam" id="PF16658">
    <property type="entry name" value="RF3_C"/>
    <property type="match status" value="1"/>
</dbReference>
<dbReference type="PRINTS" id="PR00315">
    <property type="entry name" value="ELONGATNFCT"/>
</dbReference>
<dbReference type="SUPFAM" id="SSF54980">
    <property type="entry name" value="EF-G C-terminal domain-like"/>
    <property type="match status" value="1"/>
</dbReference>
<dbReference type="SUPFAM" id="SSF52540">
    <property type="entry name" value="P-loop containing nucleoside triphosphate hydrolases"/>
    <property type="match status" value="1"/>
</dbReference>
<dbReference type="SUPFAM" id="SSF50447">
    <property type="entry name" value="Translation proteins"/>
    <property type="match status" value="1"/>
</dbReference>
<dbReference type="PROSITE" id="PS00301">
    <property type="entry name" value="G_TR_1"/>
    <property type="match status" value="1"/>
</dbReference>
<dbReference type="PROSITE" id="PS51722">
    <property type="entry name" value="G_TR_2"/>
    <property type="match status" value="1"/>
</dbReference>
<comment type="function">
    <text evidence="1">Increases the formation of ribosomal termination complexes and stimulates activities of RF-1 and RF-2. It binds guanine nucleotides and has strong preference for UGA stop codons. It may interact directly with the ribosome. The stimulation of RF-1 and RF-2 is significantly reduced by GTP and GDP, but not by GMP.</text>
</comment>
<comment type="subcellular location">
    <subcellularLocation>
        <location evidence="1">Cytoplasm</location>
    </subcellularLocation>
</comment>
<comment type="similarity">
    <text evidence="1">Belongs to the TRAFAC class translation factor GTPase superfamily. Classic translation factor GTPase family. PrfC subfamily.</text>
</comment>
<name>RF3_DESAL</name>
<protein>
    <recommendedName>
        <fullName evidence="1">Peptide chain release factor 3</fullName>
        <shortName evidence="1">RF-3</shortName>
    </recommendedName>
</protein>
<proteinExistence type="inferred from homology"/>
<keyword id="KW-0963">Cytoplasm</keyword>
<keyword id="KW-0342">GTP-binding</keyword>
<keyword id="KW-0547">Nucleotide-binding</keyword>
<keyword id="KW-0648">Protein biosynthesis</keyword>
<keyword id="KW-1185">Reference proteome</keyword>
<gene>
    <name evidence="1" type="primary">prfC</name>
    <name type="ordered locus">Dalk_3620</name>
</gene>
<feature type="chain" id="PRO_1000193519" description="Peptide chain release factor 3">
    <location>
        <begin position="1"/>
        <end position="529"/>
    </location>
</feature>
<feature type="domain" description="tr-type G">
    <location>
        <begin position="10"/>
        <end position="279"/>
    </location>
</feature>
<feature type="binding site" evidence="1">
    <location>
        <begin position="19"/>
        <end position="26"/>
    </location>
    <ligand>
        <name>GTP</name>
        <dbReference type="ChEBI" id="CHEBI:37565"/>
    </ligand>
</feature>
<feature type="binding site" evidence="1">
    <location>
        <begin position="87"/>
        <end position="91"/>
    </location>
    <ligand>
        <name>GTP</name>
        <dbReference type="ChEBI" id="CHEBI:37565"/>
    </ligand>
</feature>
<feature type="binding site" evidence="1">
    <location>
        <begin position="141"/>
        <end position="144"/>
    </location>
    <ligand>
        <name>GTP</name>
        <dbReference type="ChEBI" id="CHEBI:37565"/>
    </ligand>
</feature>